<gene>
    <name type="primary">petA</name>
    <name type="ordered locus">Alvin_0068</name>
</gene>
<dbReference type="EC" id="7.1.1.8"/>
<dbReference type="EMBL" id="AF034104">
    <property type="protein sequence ID" value="AAB86973.1"/>
    <property type="molecule type" value="Genomic_DNA"/>
</dbReference>
<dbReference type="EMBL" id="CP001896">
    <property type="protein sequence ID" value="ADC61040.1"/>
    <property type="status" value="ALT_INIT"/>
    <property type="molecule type" value="Genomic_DNA"/>
</dbReference>
<dbReference type="SMR" id="O31214"/>
<dbReference type="STRING" id="572477.Alvin_0068"/>
<dbReference type="KEGG" id="alv:Alvin_0068"/>
<dbReference type="eggNOG" id="COG0723">
    <property type="taxonomic scope" value="Bacteria"/>
</dbReference>
<dbReference type="HOGENOM" id="CLU_055690_0_2_6"/>
<dbReference type="Proteomes" id="UP000001441">
    <property type="component" value="Chromosome"/>
</dbReference>
<dbReference type="GO" id="GO:0005886">
    <property type="term" value="C:plasma membrane"/>
    <property type="evidence" value="ECO:0007669"/>
    <property type="project" value="UniProtKB-SubCell"/>
</dbReference>
<dbReference type="GO" id="GO:0051537">
    <property type="term" value="F:2 iron, 2 sulfur cluster binding"/>
    <property type="evidence" value="ECO:0007669"/>
    <property type="project" value="UniProtKB-KW"/>
</dbReference>
<dbReference type="GO" id="GO:0046872">
    <property type="term" value="F:metal ion binding"/>
    <property type="evidence" value="ECO:0007669"/>
    <property type="project" value="UniProtKB-KW"/>
</dbReference>
<dbReference type="GO" id="GO:0008121">
    <property type="term" value="F:ubiquinol-cytochrome-c reductase activity"/>
    <property type="evidence" value="ECO:0007669"/>
    <property type="project" value="UniProtKB-EC"/>
</dbReference>
<dbReference type="CDD" id="cd03470">
    <property type="entry name" value="Rieske_cytochrome_bc1"/>
    <property type="match status" value="1"/>
</dbReference>
<dbReference type="Gene3D" id="2.102.10.10">
    <property type="entry name" value="Rieske [2Fe-2S] iron-sulphur domain"/>
    <property type="match status" value="1"/>
</dbReference>
<dbReference type="Gene3D" id="1.20.5.510">
    <property type="entry name" value="Single helix bin"/>
    <property type="match status" value="1"/>
</dbReference>
<dbReference type="InterPro" id="IPR017941">
    <property type="entry name" value="Rieske_2Fe-2S"/>
</dbReference>
<dbReference type="InterPro" id="IPR036922">
    <property type="entry name" value="Rieske_2Fe-2S_sf"/>
</dbReference>
<dbReference type="InterPro" id="IPR014349">
    <property type="entry name" value="Rieske_Fe-S_prot"/>
</dbReference>
<dbReference type="InterPro" id="IPR005805">
    <property type="entry name" value="Rieske_Fe-S_prot_C"/>
</dbReference>
<dbReference type="InterPro" id="IPR019470">
    <property type="entry name" value="Ubiq_cytC_Rdtase_Fe-S_su_TAT"/>
</dbReference>
<dbReference type="InterPro" id="IPR006317">
    <property type="entry name" value="Ubiquinol_cyt_c_Rdtase_Fe-S-su"/>
</dbReference>
<dbReference type="NCBIfam" id="TIGR01416">
    <property type="entry name" value="Rieske_proteo"/>
    <property type="match status" value="1"/>
</dbReference>
<dbReference type="PANTHER" id="PTHR10134">
    <property type="entry name" value="CYTOCHROME B-C1 COMPLEX SUBUNIT RIESKE, MITOCHONDRIAL"/>
    <property type="match status" value="1"/>
</dbReference>
<dbReference type="Pfam" id="PF00355">
    <property type="entry name" value="Rieske"/>
    <property type="match status" value="1"/>
</dbReference>
<dbReference type="Pfam" id="PF10399">
    <property type="entry name" value="UCR_Fe-S_N"/>
    <property type="match status" value="1"/>
</dbReference>
<dbReference type="PRINTS" id="PR00162">
    <property type="entry name" value="RIESKE"/>
</dbReference>
<dbReference type="SUPFAM" id="SSF50022">
    <property type="entry name" value="ISP domain"/>
    <property type="match status" value="1"/>
</dbReference>
<dbReference type="PROSITE" id="PS51296">
    <property type="entry name" value="RIESKE"/>
    <property type="match status" value="1"/>
</dbReference>
<evidence type="ECO:0000255" key="1"/>
<evidence type="ECO:0000255" key="2">
    <source>
        <dbReference type="PROSITE-ProRule" id="PRU00628"/>
    </source>
</evidence>
<evidence type="ECO:0000305" key="3"/>
<reference key="1">
    <citation type="journal article" date="1998" name="Photosyn. Res.">
        <title>The pet operon, encoding the prosthetic group-containing subunits of the cytochrome bc1 complex, of the purple sulfur bacterium Chromatium vinosum.</title>
        <authorList>
            <person name="Chen Y.L."/>
            <person name="Dincturk H.B."/>
            <person name="Qin H."/>
            <person name="Knaff D.B."/>
        </authorList>
    </citation>
    <scope>NUCLEOTIDE SEQUENCE [GENOMIC DNA]</scope>
</reference>
<reference key="2">
    <citation type="journal article" date="2011" name="Stand. Genomic Sci.">
        <title>Complete genome sequence of Allochromatium vinosum DSM 180(T).</title>
        <authorList>
            <person name="Weissgerber T."/>
            <person name="Zigann R."/>
            <person name="Bruce D."/>
            <person name="Chang Y.J."/>
            <person name="Detter J.C."/>
            <person name="Han C."/>
            <person name="Hauser L."/>
            <person name="Jeffries C.D."/>
            <person name="Land M."/>
            <person name="Munk A.C."/>
            <person name="Tapia R."/>
            <person name="Dahl C."/>
        </authorList>
    </citation>
    <scope>NUCLEOTIDE SEQUENCE [LARGE SCALE GENOMIC DNA]</scope>
    <source>
        <strain>ATCC 17899 / DSM 180 / NBRC 103801 / NCIMB 10441 / D</strain>
    </source>
</reference>
<feature type="chain" id="PRO_0000127760" description="Ubiquinol-cytochrome c reductase iron-sulfur subunit">
    <location>
        <begin position="1"/>
        <end position="207"/>
    </location>
</feature>
<feature type="transmembrane region" description="Helical" evidence="1">
    <location>
        <begin position="24"/>
        <end position="44"/>
    </location>
</feature>
<feature type="domain" description="Rieske" evidence="2">
    <location>
        <begin position="100"/>
        <end position="199"/>
    </location>
</feature>
<feature type="binding site" evidence="2">
    <location>
        <position position="134"/>
    </location>
    <ligand>
        <name>[2Fe-2S] cluster</name>
        <dbReference type="ChEBI" id="CHEBI:190135"/>
    </ligand>
</feature>
<feature type="binding site" evidence="2">
    <location>
        <position position="136"/>
    </location>
    <ligand>
        <name>[2Fe-2S] cluster</name>
        <dbReference type="ChEBI" id="CHEBI:190135"/>
    </ligand>
</feature>
<feature type="binding site" evidence="2">
    <location>
        <position position="162"/>
    </location>
    <ligand>
        <name>[2Fe-2S] cluster</name>
        <dbReference type="ChEBI" id="CHEBI:190135"/>
    </ligand>
</feature>
<feature type="binding site" evidence="2">
    <location>
        <position position="165"/>
    </location>
    <ligand>
        <name>[2Fe-2S] cluster</name>
        <dbReference type="ChEBI" id="CHEBI:190135"/>
    </ligand>
</feature>
<feature type="disulfide bond" evidence="2">
    <location>
        <begin position="139"/>
        <end position="164"/>
    </location>
</feature>
<feature type="sequence conflict" description="In Ref. 1; AAB86973." evidence="3" ref="1">
    <original>K</original>
    <variation>M</variation>
    <location>
        <position position="80"/>
    </location>
</feature>
<feature type="sequence conflict" description="In Ref. 1; AAB86973." evidence="3" ref="1">
    <original>P</original>
    <variation>S</variation>
    <location>
        <position position="89"/>
    </location>
</feature>
<feature type="sequence conflict" description="In Ref. 1; AAB86973." evidence="3" ref="1">
    <original>D</original>
    <variation>G</variation>
    <location>
        <position position="155"/>
    </location>
</feature>
<name>UCRI_ALLVD</name>
<protein>
    <recommendedName>
        <fullName>Ubiquinol-cytochrome c reductase iron-sulfur subunit</fullName>
        <ecNumber>7.1.1.8</ecNumber>
    </recommendedName>
    <alternativeName>
        <fullName>Rieske iron-sulfur protein</fullName>
        <shortName>RISP</shortName>
    </alternativeName>
</protein>
<comment type="function">
    <text>Component of the ubiquinol-cytochrome c reductase complex (complex III or cytochrome b-c1 complex), which is a respiratory chain that generates an electrochemical potential coupled to ATP synthesis.</text>
</comment>
<comment type="catalytic activity">
    <reaction>
        <text>a quinol + 2 Fe(III)-[cytochrome c](out) = a quinone + 2 Fe(II)-[cytochrome c](out) + 2 H(+)(out)</text>
        <dbReference type="Rhea" id="RHEA:11484"/>
        <dbReference type="Rhea" id="RHEA-COMP:10350"/>
        <dbReference type="Rhea" id="RHEA-COMP:14399"/>
        <dbReference type="ChEBI" id="CHEBI:15378"/>
        <dbReference type="ChEBI" id="CHEBI:24646"/>
        <dbReference type="ChEBI" id="CHEBI:29033"/>
        <dbReference type="ChEBI" id="CHEBI:29034"/>
        <dbReference type="ChEBI" id="CHEBI:132124"/>
        <dbReference type="EC" id="7.1.1.8"/>
    </reaction>
</comment>
<comment type="cofactor">
    <cofactor evidence="2">
        <name>[2Fe-2S] cluster</name>
        <dbReference type="ChEBI" id="CHEBI:190135"/>
    </cofactor>
    <text evidence="2">Binds 1 [2Fe-2S] cluster per subunit.</text>
</comment>
<comment type="subunit">
    <text>The main subunits of complex b-c1 are: cytochrome b, cytochrome c1 and the Rieske protein.</text>
</comment>
<comment type="subcellular location">
    <subcellularLocation>
        <location evidence="3">Cell membrane</location>
        <topology evidence="3">Single-pass membrane protein</topology>
    </subcellularLocation>
</comment>
<comment type="miscellaneous">
    <text>The Rieske protein is a high potential 2Fe-2S protein.</text>
</comment>
<comment type="sequence caution" evidence="3">
    <conflict type="erroneous initiation">
        <sequence resource="EMBL-CDS" id="ADC61040"/>
    </conflict>
    <text>Truncated N-terminus.</text>
</comment>
<keyword id="KW-0001">2Fe-2S</keyword>
<keyword id="KW-1003">Cell membrane</keyword>
<keyword id="KW-1015">Disulfide bond</keyword>
<keyword id="KW-0249">Electron transport</keyword>
<keyword id="KW-0408">Iron</keyword>
<keyword id="KW-0411">Iron-sulfur</keyword>
<keyword id="KW-0472">Membrane</keyword>
<keyword id="KW-0479">Metal-binding</keyword>
<keyword id="KW-1185">Reference proteome</keyword>
<keyword id="KW-1278">Translocase</keyword>
<keyword id="KW-0812">Transmembrane</keyword>
<keyword id="KW-1133">Transmembrane helix</keyword>
<keyword id="KW-0813">Transport</keyword>
<proteinExistence type="inferred from homology"/>
<sequence length="207" mass="22190">MLASAGGYWPMSAQGVNKMRRRVLVAATSVVGAVGAGYALVPFVASMNPSARARAAGAPVEADISKLEPGALLRVKWRGKPVWVVHRSPEMLAALSSNDPKLVDPTSEVPQQPDYCKNPTRSIKPEYLVAIGICTHLGCSPTYRPEFGPDDLGSDWKGGFHCPCHGSRFDLAARVFKNVPAPTNLVIPKHVYLNDTTILIGEDRGSA</sequence>
<organism>
    <name type="scientific">Allochromatium vinosum (strain ATCC 17899 / DSM 180 / NBRC 103801 / NCIMB 10441 / D)</name>
    <name type="common">Chromatium vinosum</name>
    <dbReference type="NCBI Taxonomy" id="572477"/>
    <lineage>
        <taxon>Bacteria</taxon>
        <taxon>Pseudomonadati</taxon>
        <taxon>Pseudomonadota</taxon>
        <taxon>Gammaproteobacteria</taxon>
        <taxon>Chromatiales</taxon>
        <taxon>Chromatiaceae</taxon>
        <taxon>Allochromatium</taxon>
    </lineage>
</organism>
<accession>O31214</accession>
<accession>D3RUZ1</accession>